<keyword id="KW-0963">Cytoplasm</keyword>
<keyword id="KW-0489">Methyltransferase</keyword>
<keyword id="KW-0949">S-adenosyl-L-methionine</keyword>
<keyword id="KW-0808">Transferase</keyword>
<keyword id="KW-0819">tRNA processing</keyword>
<comment type="function">
    <text evidence="1">Specifically methylates guanosine-37 in various tRNAs.</text>
</comment>
<comment type="catalytic activity">
    <reaction evidence="1">
        <text>guanosine(37) in tRNA + S-adenosyl-L-methionine = N(1)-methylguanosine(37) in tRNA + S-adenosyl-L-homocysteine + H(+)</text>
        <dbReference type="Rhea" id="RHEA:36899"/>
        <dbReference type="Rhea" id="RHEA-COMP:10145"/>
        <dbReference type="Rhea" id="RHEA-COMP:10147"/>
        <dbReference type="ChEBI" id="CHEBI:15378"/>
        <dbReference type="ChEBI" id="CHEBI:57856"/>
        <dbReference type="ChEBI" id="CHEBI:59789"/>
        <dbReference type="ChEBI" id="CHEBI:73542"/>
        <dbReference type="ChEBI" id="CHEBI:74269"/>
        <dbReference type="EC" id="2.1.1.228"/>
    </reaction>
</comment>
<comment type="subunit">
    <text evidence="1">Homodimer.</text>
</comment>
<comment type="subcellular location">
    <subcellularLocation>
        <location evidence="1">Cytoplasm</location>
    </subcellularLocation>
</comment>
<comment type="similarity">
    <text evidence="1">Belongs to the RNA methyltransferase TrmD family.</text>
</comment>
<gene>
    <name evidence="1" type="primary">trmD</name>
    <name type="ordered locus">mma_0593</name>
</gene>
<sequence>MQFDVVTLFPEMFTAITQSGITRRAFEQKKCALSLWNPRDFTSDKHRTVDDRPYGGGPGMVMMVKPLEAAVQAAKARQTEQGLAAPRVVYLSPQGKALTHERVMQLTTEPGLVLLCGRYEAVDQRFLDSCVDEEISLGDFVLSGGEIPAMALMDAVIRQLPGVLHDDASAVEDSFVNGLLDCPHYTRPEVYEGAAVPAVLMGGHHVEIEKWRRERALEATARKRPDLIVKAREAGLLTRSDEKFLSSML</sequence>
<organism>
    <name type="scientific">Janthinobacterium sp. (strain Marseille)</name>
    <name type="common">Minibacterium massiliensis</name>
    <dbReference type="NCBI Taxonomy" id="375286"/>
    <lineage>
        <taxon>Bacteria</taxon>
        <taxon>Pseudomonadati</taxon>
        <taxon>Pseudomonadota</taxon>
        <taxon>Betaproteobacteria</taxon>
        <taxon>Burkholderiales</taxon>
        <taxon>Oxalobacteraceae</taxon>
        <taxon>Janthinobacterium</taxon>
    </lineage>
</organism>
<protein>
    <recommendedName>
        <fullName evidence="1">tRNA (guanine-N(1)-)-methyltransferase</fullName>
        <ecNumber evidence="1">2.1.1.228</ecNumber>
    </recommendedName>
    <alternativeName>
        <fullName evidence="1">M1G-methyltransferase</fullName>
    </alternativeName>
    <alternativeName>
        <fullName evidence="1">tRNA [GM37] methyltransferase</fullName>
    </alternativeName>
</protein>
<dbReference type="EC" id="2.1.1.228" evidence="1"/>
<dbReference type="EMBL" id="CP000269">
    <property type="protein sequence ID" value="ABR88713.1"/>
    <property type="molecule type" value="Genomic_DNA"/>
</dbReference>
<dbReference type="RefSeq" id="WP_012078457.1">
    <property type="nucleotide sequence ID" value="NC_009659.1"/>
</dbReference>
<dbReference type="SMR" id="A6SVI6"/>
<dbReference type="STRING" id="375286.mma_0593"/>
<dbReference type="KEGG" id="mms:mma_0593"/>
<dbReference type="eggNOG" id="COG0336">
    <property type="taxonomic scope" value="Bacteria"/>
</dbReference>
<dbReference type="HOGENOM" id="CLU_047363_0_2_4"/>
<dbReference type="OrthoDB" id="9807416at2"/>
<dbReference type="Proteomes" id="UP000006388">
    <property type="component" value="Chromosome"/>
</dbReference>
<dbReference type="GO" id="GO:0005829">
    <property type="term" value="C:cytosol"/>
    <property type="evidence" value="ECO:0007669"/>
    <property type="project" value="TreeGrafter"/>
</dbReference>
<dbReference type="GO" id="GO:0052906">
    <property type="term" value="F:tRNA (guanine(37)-N1)-methyltransferase activity"/>
    <property type="evidence" value="ECO:0007669"/>
    <property type="project" value="UniProtKB-UniRule"/>
</dbReference>
<dbReference type="GO" id="GO:0002939">
    <property type="term" value="P:tRNA N1-guanine methylation"/>
    <property type="evidence" value="ECO:0007669"/>
    <property type="project" value="TreeGrafter"/>
</dbReference>
<dbReference type="CDD" id="cd18080">
    <property type="entry name" value="TrmD-like"/>
    <property type="match status" value="1"/>
</dbReference>
<dbReference type="FunFam" id="1.10.1270.20:FF:000001">
    <property type="entry name" value="tRNA (guanine-N(1)-)-methyltransferase"/>
    <property type="match status" value="1"/>
</dbReference>
<dbReference type="FunFam" id="3.40.1280.10:FF:000001">
    <property type="entry name" value="tRNA (guanine-N(1)-)-methyltransferase"/>
    <property type="match status" value="1"/>
</dbReference>
<dbReference type="Gene3D" id="3.40.1280.10">
    <property type="match status" value="1"/>
</dbReference>
<dbReference type="Gene3D" id="1.10.1270.20">
    <property type="entry name" value="tRNA(m1g37)methyltransferase, domain 2"/>
    <property type="match status" value="1"/>
</dbReference>
<dbReference type="HAMAP" id="MF_00605">
    <property type="entry name" value="TrmD"/>
    <property type="match status" value="1"/>
</dbReference>
<dbReference type="InterPro" id="IPR029028">
    <property type="entry name" value="Alpha/beta_knot_MTases"/>
</dbReference>
<dbReference type="InterPro" id="IPR023148">
    <property type="entry name" value="tRNA_m1G_MeTrfase_C_sf"/>
</dbReference>
<dbReference type="InterPro" id="IPR002649">
    <property type="entry name" value="tRNA_m1G_MeTrfase_TrmD"/>
</dbReference>
<dbReference type="InterPro" id="IPR029026">
    <property type="entry name" value="tRNA_m1G_MTases_N"/>
</dbReference>
<dbReference type="InterPro" id="IPR016009">
    <property type="entry name" value="tRNA_MeTrfase_TRMD/TRM10"/>
</dbReference>
<dbReference type="NCBIfam" id="NF000648">
    <property type="entry name" value="PRK00026.1"/>
    <property type="match status" value="1"/>
</dbReference>
<dbReference type="NCBIfam" id="TIGR00088">
    <property type="entry name" value="trmD"/>
    <property type="match status" value="1"/>
</dbReference>
<dbReference type="PANTHER" id="PTHR46417">
    <property type="entry name" value="TRNA (GUANINE-N(1)-)-METHYLTRANSFERASE"/>
    <property type="match status" value="1"/>
</dbReference>
<dbReference type="PANTHER" id="PTHR46417:SF1">
    <property type="entry name" value="TRNA (GUANINE-N(1)-)-METHYLTRANSFERASE"/>
    <property type="match status" value="1"/>
</dbReference>
<dbReference type="Pfam" id="PF01746">
    <property type="entry name" value="tRNA_m1G_MT"/>
    <property type="match status" value="1"/>
</dbReference>
<dbReference type="PIRSF" id="PIRSF000386">
    <property type="entry name" value="tRNA_mtase"/>
    <property type="match status" value="1"/>
</dbReference>
<dbReference type="SUPFAM" id="SSF75217">
    <property type="entry name" value="alpha/beta knot"/>
    <property type="match status" value="1"/>
</dbReference>
<proteinExistence type="inferred from homology"/>
<reference key="1">
    <citation type="journal article" date="2007" name="PLoS Genet.">
        <title>Genome analysis of Minibacterium massiliensis highlights the convergent evolution of water-living bacteria.</title>
        <authorList>
            <person name="Audic S."/>
            <person name="Robert C."/>
            <person name="Campagna B."/>
            <person name="Parinello H."/>
            <person name="Claverie J.-M."/>
            <person name="Raoult D."/>
            <person name="Drancourt M."/>
        </authorList>
    </citation>
    <scope>NUCLEOTIDE SEQUENCE [LARGE SCALE GENOMIC DNA]</scope>
    <source>
        <strain>Marseille</strain>
    </source>
</reference>
<evidence type="ECO:0000255" key="1">
    <source>
        <dbReference type="HAMAP-Rule" id="MF_00605"/>
    </source>
</evidence>
<feature type="chain" id="PRO_1000006486" description="tRNA (guanine-N(1)-)-methyltransferase">
    <location>
        <begin position="1"/>
        <end position="249"/>
    </location>
</feature>
<feature type="binding site" evidence="1">
    <location>
        <position position="117"/>
    </location>
    <ligand>
        <name>S-adenosyl-L-methionine</name>
        <dbReference type="ChEBI" id="CHEBI:59789"/>
    </ligand>
</feature>
<feature type="binding site" evidence="1">
    <location>
        <begin position="137"/>
        <end position="142"/>
    </location>
    <ligand>
        <name>S-adenosyl-L-methionine</name>
        <dbReference type="ChEBI" id="CHEBI:59789"/>
    </ligand>
</feature>
<name>TRMD_JANMA</name>
<accession>A6SVI6</accession>